<protein>
    <recommendedName>
        <fullName evidence="1">Methionine--tRNA ligase</fullName>
        <ecNumber evidence="1">6.1.1.10</ecNumber>
    </recommendedName>
    <alternativeName>
        <fullName evidence="1">Methionyl-tRNA synthetase</fullName>
        <shortName evidence="1">MetRS</shortName>
    </alternativeName>
</protein>
<accession>A6GVQ2</accession>
<keyword id="KW-0030">Aminoacyl-tRNA synthetase</keyword>
<keyword id="KW-0067">ATP-binding</keyword>
<keyword id="KW-0963">Cytoplasm</keyword>
<keyword id="KW-0436">Ligase</keyword>
<keyword id="KW-0479">Metal-binding</keyword>
<keyword id="KW-0547">Nucleotide-binding</keyword>
<keyword id="KW-0648">Protein biosynthesis</keyword>
<keyword id="KW-1185">Reference proteome</keyword>
<keyword id="KW-0694">RNA-binding</keyword>
<keyword id="KW-0820">tRNA-binding</keyword>
<keyword id="KW-0862">Zinc</keyword>
<name>SYM_FLAPJ</name>
<gene>
    <name evidence="1" type="primary">metG</name>
    <name type="ordered locus">FP0055</name>
</gene>
<comment type="function">
    <text evidence="1">Is required not only for elongation of protein synthesis but also for the initiation of all mRNA translation through initiator tRNA(fMet) aminoacylation.</text>
</comment>
<comment type="catalytic activity">
    <reaction evidence="1">
        <text>tRNA(Met) + L-methionine + ATP = L-methionyl-tRNA(Met) + AMP + diphosphate</text>
        <dbReference type="Rhea" id="RHEA:13481"/>
        <dbReference type="Rhea" id="RHEA-COMP:9667"/>
        <dbReference type="Rhea" id="RHEA-COMP:9698"/>
        <dbReference type="ChEBI" id="CHEBI:30616"/>
        <dbReference type="ChEBI" id="CHEBI:33019"/>
        <dbReference type="ChEBI" id="CHEBI:57844"/>
        <dbReference type="ChEBI" id="CHEBI:78442"/>
        <dbReference type="ChEBI" id="CHEBI:78530"/>
        <dbReference type="ChEBI" id="CHEBI:456215"/>
        <dbReference type="EC" id="6.1.1.10"/>
    </reaction>
</comment>
<comment type="cofactor">
    <cofactor evidence="1">
        <name>Zn(2+)</name>
        <dbReference type="ChEBI" id="CHEBI:29105"/>
    </cofactor>
    <text evidence="1">Binds 1 zinc ion per subunit.</text>
</comment>
<comment type="subunit">
    <text evidence="1">Homodimer.</text>
</comment>
<comment type="subcellular location">
    <subcellularLocation>
        <location evidence="1">Cytoplasm</location>
    </subcellularLocation>
</comment>
<comment type="similarity">
    <text evidence="1">Belongs to the class-I aminoacyl-tRNA synthetase family. MetG type 1 subfamily.</text>
</comment>
<evidence type="ECO:0000255" key="1">
    <source>
        <dbReference type="HAMAP-Rule" id="MF_00098"/>
    </source>
</evidence>
<proteinExistence type="inferred from homology"/>
<organism>
    <name type="scientific">Flavobacterium psychrophilum (strain ATCC 49511 / DSM 21280 / CIP 103535 / JIP02/86)</name>
    <dbReference type="NCBI Taxonomy" id="402612"/>
    <lineage>
        <taxon>Bacteria</taxon>
        <taxon>Pseudomonadati</taxon>
        <taxon>Bacteroidota</taxon>
        <taxon>Flavobacteriia</taxon>
        <taxon>Flavobacteriales</taxon>
        <taxon>Flavobacteriaceae</taxon>
        <taxon>Flavobacterium</taxon>
    </lineage>
</organism>
<sequence>MIQNPKRYTITAALPYTNGPIHIGHLAGVYMPSDIYSRYLRLQGKDVAFMCGSDEHGVAISMKAKKEGITPQEVIDKYDGIIRKSFVDFGISFDNYSRTSAKIHHDTASEFFKKLYDKGDFIEEVTEQLYDAKADQFLADRFVVGTCPKCGNEEAYGDQCEKCGSTLNATDLINPKSTITGETPIMKSTKHWFLPLDRYSDFLTKWILEGHKSDWKPNVYGQVKSWIDGGLEPRAVTRDLDWGIDVPVAGAEGKKLYVWFDAPIGYISATKEWAAREGKDWELYWKNEDTKLVHFIGKDNIVFHCIIFPAMLKAEGSYILPDNVPANEFLNLEGNKLSTSKNWAVWLHEYLEDFPNQQDVLRYALTANAPESKDNDFTWKDFQARNNNELAAIFGNFINRVVVLTNKYYEGVVPTPNKFSEVDEATLTELKAYPAVISSSIERYRFREALGELMNVARLGNKYLADEEPWKMVKTDPERVKTQMYVALQIATALRVLCEPFLPFTAEKLNKMLKIDAKLSWNDVTTNSDLILAGHKIGEGEILFAQIEDEQIQKQIDKLEATKTANIAENKKAEPQKELIQYDDFAKMDLRVGTIIEAEKMPKANKLLVLKVDTGIDVRTIVSGIAESFSPEEIIGKQVTVLVNLAPRALRGIESQGMILMTNLPDGKLAFVNPDVAGVGNGEGIN</sequence>
<feature type="chain" id="PRO_0000331824" description="Methionine--tRNA ligase">
    <location>
        <begin position="1"/>
        <end position="686"/>
    </location>
</feature>
<feature type="domain" description="tRNA-binding" evidence="1">
    <location>
        <begin position="584"/>
        <end position="686"/>
    </location>
</feature>
<feature type="short sequence motif" description="'HIGH' region">
    <location>
        <begin position="15"/>
        <end position="25"/>
    </location>
</feature>
<feature type="short sequence motif" description="'KMSKS' region">
    <location>
        <begin position="336"/>
        <end position="340"/>
    </location>
</feature>
<feature type="binding site" evidence="1">
    <location>
        <position position="147"/>
    </location>
    <ligand>
        <name>Zn(2+)</name>
        <dbReference type="ChEBI" id="CHEBI:29105"/>
    </ligand>
</feature>
<feature type="binding site" evidence="1">
    <location>
        <position position="150"/>
    </location>
    <ligand>
        <name>Zn(2+)</name>
        <dbReference type="ChEBI" id="CHEBI:29105"/>
    </ligand>
</feature>
<feature type="binding site" evidence="1">
    <location>
        <position position="160"/>
    </location>
    <ligand>
        <name>Zn(2+)</name>
        <dbReference type="ChEBI" id="CHEBI:29105"/>
    </ligand>
</feature>
<feature type="binding site" evidence="1">
    <location>
        <position position="163"/>
    </location>
    <ligand>
        <name>Zn(2+)</name>
        <dbReference type="ChEBI" id="CHEBI:29105"/>
    </ligand>
</feature>
<feature type="binding site" evidence="1">
    <location>
        <position position="339"/>
    </location>
    <ligand>
        <name>ATP</name>
        <dbReference type="ChEBI" id="CHEBI:30616"/>
    </ligand>
</feature>
<reference key="1">
    <citation type="journal article" date="2007" name="Nat. Biotechnol.">
        <title>Complete genome sequence of the fish pathogen Flavobacterium psychrophilum.</title>
        <authorList>
            <person name="Duchaud E."/>
            <person name="Boussaha M."/>
            <person name="Loux V."/>
            <person name="Bernardet J.-F."/>
            <person name="Michel C."/>
            <person name="Kerouault B."/>
            <person name="Mondot S."/>
            <person name="Nicolas P."/>
            <person name="Bossy R."/>
            <person name="Caron C."/>
            <person name="Bessieres P."/>
            <person name="Gibrat J.-F."/>
            <person name="Claverol S."/>
            <person name="Dumetz F."/>
            <person name="Le Henaff M."/>
            <person name="Benmansour A."/>
        </authorList>
    </citation>
    <scope>NUCLEOTIDE SEQUENCE [LARGE SCALE GENOMIC DNA]</scope>
    <source>
        <strain>ATCC 49511 / DSM 21280 / CIP 103535 / JIP02/86</strain>
    </source>
</reference>
<dbReference type="EC" id="6.1.1.10" evidence="1"/>
<dbReference type="EMBL" id="AM398681">
    <property type="protein sequence ID" value="CAL42174.1"/>
    <property type="molecule type" value="Genomic_DNA"/>
</dbReference>
<dbReference type="RefSeq" id="WP_011962236.1">
    <property type="nucleotide sequence ID" value="NC_009613.3"/>
</dbReference>
<dbReference type="RefSeq" id="YP_001294995.1">
    <property type="nucleotide sequence ID" value="NC_009613.3"/>
</dbReference>
<dbReference type="SMR" id="A6GVQ2"/>
<dbReference type="STRING" id="402612.FP0055"/>
<dbReference type="EnsemblBacteria" id="CAL42174">
    <property type="protein sequence ID" value="CAL42174"/>
    <property type="gene ID" value="FP0055"/>
</dbReference>
<dbReference type="GeneID" id="66553666"/>
<dbReference type="KEGG" id="fps:FP0055"/>
<dbReference type="PATRIC" id="fig|402612.5.peg.59"/>
<dbReference type="eggNOG" id="COG0073">
    <property type="taxonomic scope" value="Bacteria"/>
</dbReference>
<dbReference type="eggNOG" id="COG0143">
    <property type="taxonomic scope" value="Bacteria"/>
</dbReference>
<dbReference type="HOGENOM" id="CLU_009710_1_2_10"/>
<dbReference type="OrthoDB" id="9810191at2"/>
<dbReference type="Proteomes" id="UP000006394">
    <property type="component" value="Chromosome"/>
</dbReference>
<dbReference type="GO" id="GO:0005829">
    <property type="term" value="C:cytosol"/>
    <property type="evidence" value="ECO:0007669"/>
    <property type="project" value="TreeGrafter"/>
</dbReference>
<dbReference type="GO" id="GO:0005524">
    <property type="term" value="F:ATP binding"/>
    <property type="evidence" value="ECO:0007669"/>
    <property type="project" value="UniProtKB-UniRule"/>
</dbReference>
<dbReference type="GO" id="GO:0046872">
    <property type="term" value="F:metal ion binding"/>
    <property type="evidence" value="ECO:0007669"/>
    <property type="project" value="UniProtKB-KW"/>
</dbReference>
<dbReference type="GO" id="GO:0004825">
    <property type="term" value="F:methionine-tRNA ligase activity"/>
    <property type="evidence" value="ECO:0007669"/>
    <property type="project" value="UniProtKB-UniRule"/>
</dbReference>
<dbReference type="GO" id="GO:0000049">
    <property type="term" value="F:tRNA binding"/>
    <property type="evidence" value="ECO:0007669"/>
    <property type="project" value="UniProtKB-KW"/>
</dbReference>
<dbReference type="GO" id="GO:0006431">
    <property type="term" value="P:methionyl-tRNA aminoacylation"/>
    <property type="evidence" value="ECO:0007669"/>
    <property type="project" value="UniProtKB-UniRule"/>
</dbReference>
<dbReference type="CDD" id="cd07957">
    <property type="entry name" value="Anticodon_Ia_Met"/>
    <property type="match status" value="1"/>
</dbReference>
<dbReference type="CDD" id="cd00814">
    <property type="entry name" value="MetRS_core"/>
    <property type="match status" value="1"/>
</dbReference>
<dbReference type="CDD" id="cd02800">
    <property type="entry name" value="tRNA_bind_EcMetRS_like"/>
    <property type="match status" value="1"/>
</dbReference>
<dbReference type="FunFam" id="2.20.28.20:FF:000001">
    <property type="entry name" value="Methionine--tRNA ligase"/>
    <property type="match status" value="1"/>
</dbReference>
<dbReference type="Gene3D" id="3.40.50.620">
    <property type="entry name" value="HUPs"/>
    <property type="match status" value="1"/>
</dbReference>
<dbReference type="Gene3D" id="1.10.730.10">
    <property type="entry name" value="Isoleucyl-tRNA Synthetase, Domain 1"/>
    <property type="match status" value="1"/>
</dbReference>
<dbReference type="Gene3D" id="2.20.28.20">
    <property type="entry name" value="Methionyl-tRNA synthetase, Zn-domain"/>
    <property type="match status" value="1"/>
</dbReference>
<dbReference type="Gene3D" id="2.40.50.140">
    <property type="entry name" value="Nucleic acid-binding proteins"/>
    <property type="match status" value="1"/>
</dbReference>
<dbReference type="HAMAP" id="MF_00098">
    <property type="entry name" value="Met_tRNA_synth_type1"/>
    <property type="match status" value="1"/>
</dbReference>
<dbReference type="InterPro" id="IPR001412">
    <property type="entry name" value="aa-tRNA-synth_I_CS"/>
</dbReference>
<dbReference type="InterPro" id="IPR041872">
    <property type="entry name" value="Anticodon_Met"/>
</dbReference>
<dbReference type="InterPro" id="IPR004495">
    <property type="entry name" value="Met-tRNA-synth_bsu_C"/>
</dbReference>
<dbReference type="InterPro" id="IPR023458">
    <property type="entry name" value="Met-tRNA_ligase_1"/>
</dbReference>
<dbReference type="InterPro" id="IPR014758">
    <property type="entry name" value="Met-tRNA_synth"/>
</dbReference>
<dbReference type="InterPro" id="IPR015413">
    <property type="entry name" value="Methionyl/Leucyl_tRNA_Synth"/>
</dbReference>
<dbReference type="InterPro" id="IPR033911">
    <property type="entry name" value="MetRS_core"/>
</dbReference>
<dbReference type="InterPro" id="IPR029038">
    <property type="entry name" value="MetRS_Zn"/>
</dbReference>
<dbReference type="InterPro" id="IPR012340">
    <property type="entry name" value="NA-bd_OB-fold"/>
</dbReference>
<dbReference type="InterPro" id="IPR014729">
    <property type="entry name" value="Rossmann-like_a/b/a_fold"/>
</dbReference>
<dbReference type="InterPro" id="IPR002547">
    <property type="entry name" value="tRNA-bd_dom"/>
</dbReference>
<dbReference type="InterPro" id="IPR009080">
    <property type="entry name" value="tRNAsynth_Ia_anticodon-bd"/>
</dbReference>
<dbReference type="NCBIfam" id="TIGR00398">
    <property type="entry name" value="metG"/>
    <property type="match status" value="1"/>
</dbReference>
<dbReference type="NCBIfam" id="TIGR00399">
    <property type="entry name" value="metG_C_term"/>
    <property type="match status" value="1"/>
</dbReference>
<dbReference type="NCBIfam" id="NF001100">
    <property type="entry name" value="PRK00133.1"/>
    <property type="match status" value="1"/>
</dbReference>
<dbReference type="PANTHER" id="PTHR45765">
    <property type="entry name" value="METHIONINE--TRNA LIGASE"/>
    <property type="match status" value="1"/>
</dbReference>
<dbReference type="PANTHER" id="PTHR45765:SF1">
    <property type="entry name" value="METHIONINE--TRNA LIGASE, CYTOPLASMIC"/>
    <property type="match status" value="1"/>
</dbReference>
<dbReference type="Pfam" id="PF19303">
    <property type="entry name" value="Anticodon_3"/>
    <property type="match status" value="1"/>
</dbReference>
<dbReference type="Pfam" id="PF09334">
    <property type="entry name" value="tRNA-synt_1g"/>
    <property type="match status" value="1"/>
</dbReference>
<dbReference type="Pfam" id="PF01588">
    <property type="entry name" value="tRNA_bind"/>
    <property type="match status" value="1"/>
</dbReference>
<dbReference type="PRINTS" id="PR01041">
    <property type="entry name" value="TRNASYNTHMET"/>
</dbReference>
<dbReference type="SUPFAM" id="SSF47323">
    <property type="entry name" value="Anticodon-binding domain of a subclass of class I aminoacyl-tRNA synthetases"/>
    <property type="match status" value="1"/>
</dbReference>
<dbReference type="SUPFAM" id="SSF57770">
    <property type="entry name" value="Methionyl-tRNA synthetase (MetRS), Zn-domain"/>
    <property type="match status" value="1"/>
</dbReference>
<dbReference type="SUPFAM" id="SSF50249">
    <property type="entry name" value="Nucleic acid-binding proteins"/>
    <property type="match status" value="1"/>
</dbReference>
<dbReference type="SUPFAM" id="SSF52374">
    <property type="entry name" value="Nucleotidylyl transferase"/>
    <property type="match status" value="1"/>
</dbReference>
<dbReference type="PROSITE" id="PS00178">
    <property type="entry name" value="AA_TRNA_LIGASE_I"/>
    <property type="match status" value="1"/>
</dbReference>
<dbReference type="PROSITE" id="PS50886">
    <property type="entry name" value="TRBD"/>
    <property type="match status" value="1"/>
</dbReference>